<proteinExistence type="inferred from homology"/>
<dbReference type="EMBL" id="FM200053">
    <property type="protein sequence ID" value="CAR62195.1"/>
    <property type="molecule type" value="Genomic_DNA"/>
</dbReference>
<dbReference type="RefSeq" id="WP_001519453.1">
    <property type="nucleotide sequence ID" value="NC_011147.1"/>
</dbReference>
<dbReference type="SMR" id="B5BKL0"/>
<dbReference type="GeneID" id="66758616"/>
<dbReference type="KEGG" id="sek:SSPA3909"/>
<dbReference type="HOGENOM" id="CLU_166075_0_0_6"/>
<dbReference type="Proteomes" id="UP000001869">
    <property type="component" value="Chromosome"/>
</dbReference>
<dbReference type="GO" id="GO:1990077">
    <property type="term" value="C:primosome complex"/>
    <property type="evidence" value="ECO:0007669"/>
    <property type="project" value="UniProtKB-KW"/>
</dbReference>
<dbReference type="GO" id="GO:0003697">
    <property type="term" value="F:single-stranded DNA binding"/>
    <property type="evidence" value="ECO:0007669"/>
    <property type="project" value="UniProtKB-UniRule"/>
</dbReference>
<dbReference type="GO" id="GO:0006269">
    <property type="term" value="P:DNA replication, synthesis of primer"/>
    <property type="evidence" value="ECO:0007669"/>
    <property type="project" value="UniProtKB-KW"/>
</dbReference>
<dbReference type="CDD" id="cd04496">
    <property type="entry name" value="SSB_OBF"/>
    <property type="match status" value="1"/>
</dbReference>
<dbReference type="FunFam" id="2.40.50.140:FF:000077">
    <property type="entry name" value="Primosomal replication protein N"/>
    <property type="match status" value="1"/>
</dbReference>
<dbReference type="Gene3D" id="2.40.50.140">
    <property type="entry name" value="Nucleic acid-binding proteins"/>
    <property type="match status" value="1"/>
</dbReference>
<dbReference type="HAMAP" id="MF_00720">
    <property type="entry name" value="PriB"/>
    <property type="match status" value="1"/>
</dbReference>
<dbReference type="InterPro" id="IPR012340">
    <property type="entry name" value="NA-bd_OB-fold"/>
</dbReference>
<dbReference type="InterPro" id="IPR000424">
    <property type="entry name" value="Primosome_PriB/ssb"/>
</dbReference>
<dbReference type="InterPro" id="IPR023646">
    <property type="entry name" value="Prisomal_replication_PriB"/>
</dbReference>
<dbReference type="NCBIfam" id="TIGR04418">
    <property type="entry name" value="PriB_gamma"/>
    <property type="match status" value="1"/>
</dbReference>
<dbReference type="Pfam" id="PF22657">
    <property type="entry name" value="SSB_1"/>
    <property type="match status" value="1"/>
</dbReference>
<dbReference type="PIRSF" id="PIRSF003135">
    <property type="entry name" value="Primosomal_n"/>
    <property type="match status" value="1"/>
</dbReference>
<dbReference type="SUPFAM" id="SSF50249">
    <property type="entry name" value="Nucleic acid-binding proteins"/>
    <property type="match status" value="1"/>
</dbReference>
<dbReference type="PROSITE" id="PS50935">
    <property type="entry name" value="SSB"/>
    <property type="match status" value="1"/>
</dbReference>
<reference key="1">
    <citation type="journal article" date="2009" name="BMC Genomics">
        <title>Pseudogene accumulation in the evolutionary histories of Salmonella enterica serovars Paratyphi A and Typhi.</title>
        <authorList>
            <person name="Holt K.E."/>
            <person name="Thomson N.R."/>
            <person name="Wain J."/>
            <person name="Langridge G.C."/>
            <person name="Hasan R."/>
            <person name="Bhutta Z.A."/>
            <person name="Quail M.A."/>
            <person name="Norbertczak H."/>
            <person name="Walker D."/>
            <person name="Simmonds M."/>
            <person name="White B."/>
            <person name="Bason N."/>
            <person name="Mungall K."/>
            <person name="Dougan G."/>
            <person name="Parkhill J."/>
        </authorList>
    </citation>
    <scope>NUCLEOTIDE SEQUENCE [LARGE SCALE GENOMIC DNA]</scope>
    <source>
        <strain>AKU_12601</strain>
    </source>
</reference>
<name>PRIB_SALPK</name>
<feature type="chain" id="PRO_1000132632" description="Replication restart protein PriB">
    <location>
        <begin position="1"/>
        <end position="104"/>
    </location>
</feature>
<feature type="domain" description="SSB" evidence="1">
    <location>
        <begin position="1"/>
        <end position="101"/>
    </location>
</feature>
<comment type="function">
    <text evidence="1">Involved in the restart of stalled replication forks, which reloads the replicative helicase on sites other than the origin of replication; the PriA-PriB pathway is the major replication restart pathway. During primosome assembly it facilitates complex formation between PriA and DnaT on DNA; stabilizes PriA on DNA. Stimulates the DNA unwinding activity of PriA helicase.</text>
</comment>
<comment type="subunit">
    <text evidence="1">Homodimer. Interacts with PriA and DnaT. Component of the replication restart primosome. Primosome assembly occurs via a 'hand-off' mechanism. PriA binds to replication forks, subsequently PriB then DnaT bind; DnaT then displaces ssDNA to generate the helicase loading substrate.</text>
</comment>
<comment type="similarity">
    <text evidence="1">Belongs to the PriB family.</text>
</comment>
<accession>B5BKL0</accession>
<keyword id="KW-0235">DNA replication</keyword>
<keyword id="KW-0238">DNA-binding</keyword>
<keyword id="KW-0639">Primosome</keyword>
<evidence type="ECO:0000255" key="1">
    <source>
        <dbReference type="HAMAP-Rule" id="MF_00720"/>
    </source>
</evidence>
<protein>
    <recommendedName>
        <fullName evidence="1">Replication restart protein PriB</fullName>
    </recommendedName>
</protein>
<sequence>MTNRLALSGTVCRAPLRKVSPSGIPHCQFVLEHRSVQEEAGFHRQAWCQMPVIVSGHENQAITHSITVGSRITVQGFISCHKAKNGLSKMVLHAEQIELIDSGD</sequence>
<organism>
    <name type="scientific">Salmonella paratyphi A (strain AKU_12601)</name>
    <dbReference type="NCBI Taxonomy" id="554290"/>
    <lineage>
        <taxon>Bacteria</taxon>
        <taxon>Pseudomonadati</taxon>
        <taxon>Pseudomonadota</taxon>
        <taxon>Gammaproteobacteria</taxon>
        <taxon>Enterobacterales</taxon>
        <taxon>Enterobacteriaceae</taxon>
        <taxon>Salmonella</taxon>
    </lineage>
</organism>
<gene>
    <name evidence="1" type="primary">priB</name>
    <name type="ordered locus">SSPA3909</name>
</gene>